<organism>
    <name type="scientific">Mycoplasma pneumoniae (strain ATCC 29342 / M129 / Subtype 1)</name>
    <name type="common">Mycoplasmoides pneumoniae</name>
    <dbReference type="NCBI Taxonomy" id="272634"/>
    <lineage>
        <taxon>Bacteria</taxon>
        <taxon>Bacillati</taxon>
        <taxon>Mycoplasmatota</taxon>
        <taxon>Mycoplasmoidales</taxon>
        <taxon>Mycoplasmoidaceae</taxon>
        <taxon>Mycoplasmoides</taxon>
    </lineage>
</organism>
<reference key="1">
    <citation type="journal article" date="1996" name="Nucleic Acids Res.">
        <title>Sequence analysis of 56 kb from the genome of the bacterium Mycoplasma pneumoniae comprising the dnaA region, the atp operon and a cluster of ribosomal protein genes.</title>
        <authorList>
            <person name="Hilbert H."/>
            <person name="Himmelreich R."/>
            <person name="Plagens H."/>
            <person name="Herrmann R."/>
        </authorList>
    </citation>
    <scope>NUCLEOTIDE SEQUENCE [GENOMIC DNA]</scope>
    <source>
        <strain>ATCC 29342 / M129 / Subtype 1</strain>
    </source>
</reference>
<reference key="2">
    <citation type="journal article" date="1996" name="Nucleic Acids Res.">
        <title>Complete sequence analysis of the genome of the bacterium Mycoplasma pneumoniae.</title>
        <authorList>
            <person name="Himmelreich R."/>
            <person name="Hilbert H."/>
            <person name="Plagens H."/>
            <person name="Pirkl E."/>
            <person name="Li B.-C."/>
            <person name="Herrmann R."/>
        </authorList>
    </citation>
    <scope>NUCLEOTIDE SEQUENCE [LARGE SCALE GENOMIC DNA]</scope>
    <source>
        <strain>ATCC 29342 / M129 / Subtype 1</strain>
    </source>
</reference>
<accession>P53527</accession>
<feature type="chain" id="PRO_0000208166" description="Probable ribose-5-phosphate isomerase B">
    <location>
        <begin position="1"/>
        <end position="152"/>
    </location>
</feature>
<feature type="active site" description="Proton acceptor" evidence="1">
    <location>
        <position position="70"/>
    </location>
</feature>
<feature type="active site" description="Proton donor" evidence="2">
    <location>
        <position position="103"/>
    </location>
</feature>
<feature type="binding site" evidence="2">
    <location>
        <begin position="12"/>
        <end position="13"/>
    </location>
    <ligand>
        <name>D-ribulose 5-phosphate</name>
        <dbReference type="ChEBI" id="CHEBI:58121"/>
    </ligand>
</feature>
<feature type="binding site" evidence="2">
    <location>
        <begin position="71"/>
        <end position="75"/>
    </location>
    <ligand>
        <name>D-ribulose 5-phosphate</name>
        <dbReference type="ChEBI" id="CHEBI:58121"/>
    </ligand>
</feature>
<feature type="binding site" evidence="2">
    <location>
        <position position="104"/>
    </location>
    <ligand>
        <name>D-ribulose 5-phosphate</name>
        <dbReference type="ChEBI" id="CHEBI:58121"/>
    </ligand>
</feature>
<feature type="binding site" evidence="2">
    <location>
        <position position="114"/>
    </location>
    <ligand>
        <name>D-ribulose 5-phosphate</name>
        <dbReference type="ChEBI" id="CHEBI:58121"/>
    </ligand>
</feature>
<feature type="binding site" evidence="2">
    <location>
        <position position="137"/>
    </location>
    <ligand>
        <name>D-ribulose 5-phosphate</name>
        <dbReference type="ChEBI" id="CHEBI:58121"/>
    </ligand>
</feature>
<feature type="binding site" evidence="2">
    <location>
        <position position="141"/>
    </location>
    <ligand>
        <name>D-ribulose 5-phosphate</name>
        <dbReference type="ChEBI" id="CHEBI:58121"/>
    </ligand>
</feature>
<keyword id="KW-0119">Carbohydrate metabolism</keyword>
<keyword id="KW-0413">Isomerase</keyword>
<keyword id="KW-1185">Reference proteome</keyword>
<comment type="function">
    <text evidence="2">Catalyzes the interconversion of ribulose-5-P and ribose-5-P.</text>
</comment>
<comment type="catalytic activity">
    <reaction evidence="2">
        <text>aldehydo-D-ribose 5-phosphate = D-ribulose 5-phosphate</text>
        <dbReference type="Rhea" id="RHEA:14657"/>
        <dbReference type="ChEBI" id="CHEBI:58121"/>
        <dbReference type="ChEBI" id="CHEBI:58273"/>
        <dbReference type="EC" id="5.3.1.6"/>
    </reaction>
</comment>
<comment type="pathway">
    <text evidence="2">Carbohydrate degradation; pentose phosphate pathway; D-ribose 5-phosphate from D-ribulose 5-phosphate (non-oxidative stage): step 1/1.</text>
</comment>
<comment type="subunit">
    <text evidence="2">Homodimer.</text>
</comment>
<comment type="similarity">
    <text evidence="3">Belongs to the LacAB/RpiB family.</text>
</comment>
<sequence length="152" mass="16699">MQMNHPIYIASDHTGLELKSLVIKHLEQQKLQVIDLGPTELDPLDDYPDYAFLLAQTMQANPNSLGILICGTGVGVCMAANKAKGILAALVVDSKTAALARQHDDANVLCLSSRFVVPEENIKIVDEFLQAQFEGGRHSKRVGKIIAYEREK</sequence>
<name>RPIB_MYCPN</name>
<proteinExistence type="inferred from homology"/>
<gene>
    <name evidence="2" type="primary">rpiB</name>
    <name type="ordered locus">MPN_595</name>
    <name type="ORF">MP247</name>
</gene>
<dbReference type="EC" id="5.3.1.6" evidence="2"/>
<dbReference type="EMBL" id="U43738">
    <property type="protein sequence ID" value="AAC43662.1"/>
    <property type="molecule type" value="Genomic_DNA"/>
</dbReference>
<dbReference type="EMBL" id="U00089">
    <property type="protein sequence ID" value="AAB95895.1"/>
    <property type="molecule type" value="Genomic_DNA"/>
</dbReference>
<dbReference type="PIR" id="S62852">
    <property type="entry name" value="S62852"/>
</dbReference>
<dbReference type="RefSeq" id="NP_110284.1">
    <property type="nucleotide sequence ID" value="NC_000912.1"/>
</dbReference>
<dbReference type="RefSeq" id="WP_010874952.1">
    <property type="nucleotide sequence ID" value="NZ_OU342337.1"/>
</dbReference>
<dbReference type="SMR" id="P53527"/>
<dbReference type="IntAct" id="P53527">
    <property type="interactions" value="2"/>
</dbReference>
<dbReference type="STRING" id="272634.MPN_595"/>
<dbReference type="EnsemblBacteria" id="AAB95895">
    <property type="protein sequence ID" value="AAB95895"/>
    <property type="gene ID" value="MPN_595"/>
</dbReference>
<dbReference type="GeneID" id="66608720"/>
<dbReference type="KEGG" id="mpn:MPN_595"/>
<dbReference type="PATRIC" id="fig|272634.6.peg.658"/>
<dbReference type="HOGENOM" id="CLU_091396_4_1_14"/>
<dbReference type="OrthoDB" id="1778624at2"/>
<dbReference type="BioCyc" id="MPNE272634:G1GJ3-969-MONOMER"/>
<dbReference type="UniPathway" id="UPA00115">
    <property type="reaction ID" value="UER00412"/>
</dbReference>
<dbReference type="Proteomes" id="UP000000808">
    <property type="component" value="Chromosome"/>
</dbReference>
<dbReference type="GO" id="GO:0004751">
    <property type="term" value="F:ribose-5-phosphate isomerase activity"/>
    <property type="evidence" value="ECO:0000250"/>
    <property type="project" value="UniProtKB"/>
</dbReference>
<dbReference type="GO" id="GO:0019316">
    <property type="term" value="P:D-allose catabolic process"/>
    <property type="evidence" value="ECO:0007669"/>
    <property type="project" value="TreeGrafter"/>
</dbReference>
<dbReference type="GO" id="GO:0009052">
    <property type="term" value="P:pentose-phosphate shunt, non-oxidative branch"/>
    <property type="evidence" value="ECO:0000250"/>
    <property type="project" value="UniProtKB"/>
</dbReference>
<dbReference type="Gene3D" id="3.40.1400.10">
    <property type="entry name" value="Sugar-phosphate isomerase, RpiB/LacA/LacB"/>
    <property type="match status" value="1"/>
</dbReference>
<dbReference type="InterPro" id="IPR004785">
    <property type="entry name" value="RpiB"/>
</dbReference>
<dbReference type="InterPro" id="IPR003500">
    <property type="entry name" value="RpiB_LacA_LacB"/>
</dbReference>
<dbReference type="InterPro" id="IPR036569">
    <property type="entry name" value="RpiB_LacA_LacB_sf"/>
</dbReference>
<dbReference type="NCBIfam" id="NF004051">
    <property type="entry name" value="PRK05571.1"/>
    <property type="match status" value="1"/>
</dbReference>
<dbReference type="NCBIfam" id="TIGR01120">
    <property type="entry name" value="rpiB"/>
    <property type="match status" value="1"/>
</dbReference>
<dbReference type="NCBIfam" id="TIGR00689">
    <property type="entry name" value="rpiB_lacA_lacB"/>
    <property type="match status" value="1"/>
</dbReference>
<dbReference type="PANTHER" id="PTHR30345:SF0">
    <property type="entry name" value="DNA DAMAGE-REPAIR_TOLERATION PROTEIN DRT102"/>
    <property type="match status" value="1"/>
</dbReference>
<dbReference type="PANTHER" id="PTHR30345">
    <property type="entry name" value="RIBOSE-5-PHOSPHATE ISOMERASE B"/>
    <property type="match status" value="1"/>
</dbReference>
<dbReference type="Pfam" id="PF02502">
    <property type="entry name" value="LacAB_rpiB"/>
    <property type="match status" value="1"/>
</dbReference>
<dbReference type="PIRSF" id="PIRSF005384">
    <property type="entry name" value="RpiB_LacA_B"/>
    <property type="match status" value="1"/>
</dbReference>
<dbReference type="SUPFAM" id="SSF89623">
    <property type="entry name" value="Ribose/Galactose isomerase RpiB/AlsB"/>
    <property type="match status" value="1"/>
</dbReference>
<evidence type="ECO:0000250" key="1">
    <source>
        <dbReference type="UniProtKB" id="P37351"/>
    </source>
</evidence>
<evidence type="ECO:0000250" key="2">
    <source>
        <dbReference type="UniProtKB" id="P9WKD7"/>
    </source>
</evidence>
<evidence type="ECO:0000305" key="3"/>
<protein>
    <recommendedName>
        <fullName evidence="2">Probable ribose-5-phosphate isomerase B</fullName>
        <ecNumber evidence="2">5.3.1.6</ecNumber>
    </recommendedName>
    <alternativeName>
        <fullName evidence="2">Phosphoriboisomerase B</fullName>
    </alternativeName>
</protein>